<keyword id="KW-0012">Acyltransferase</keyword>
<keyword id="KW-0997">Cell inner membrane</keyword>
<keyword id="KW-1003">Cell membrane</keyword>
<keyword id="KW-0472">Membrane</keyword>
<keyword id="KW-0808">Transferase</keyword>
<keyword id="KW-0812">Transmembrane</keyword>
<keyword id="KW-1133">Transmembrane helix</keyword>
<organism>
    <name type="scientific">Brucella suis biovar 1 (strain 1330)</name>
    <dbReference type="NCBI Taxonomy" id="204722"/>
    <lineage>
        <taxon>Bacteria</taxon>
        <taxon>Pseudomonadati</taxon>
        <taxon>Pseudomonadota</taxon>
        <taxon>Alphaproteobacteria</taxon>
        <taxon>Hyphomicrobiales</taxon>
        <taxon>Brucellaceae</taxon>
        <taxon>Brucella/Ochrobactrum group</taxon>
        <taxon>Brucella</taxon>
    </lineage>
</organism>
<name>LNT_BRUSU</name>
<gene>
    <name evidence="1" type="primary">lnt</name>
    <name type="ordered locus">BR2158</name>
    <name type="ordered locus">BS1330_I2152</name>
</gene>
<evidence type="ECO:0000255" key="1">
    <source>
        <dbReference type="HAMAP-Rule" id="MF_01148"/>
    </source>
</evidence>
<dbReference type="EC" id="2.3.1.269" evidence="1"/>
<dbReference type="EMBL" id="AE014291">
    <property type="protein sequence ID" value="AAN31048.1"/>
    <property type="molecule type" value="Genomic_DNA"/>
</dbReference>
<dbReference type="EMBL" id="CP002997">
    <property type="protein sequence ID" value="AEM19465.1"/>
    <property type="molecule type" value="Genomic_DNA"/>
</dbReference>
<dbReference type="RefSeq" id="WP_004691181.1">
    <property type="nucleotide sequence ID" value="NZ_KN046804.1"/>
</dbReference>
<dbReference type="SMR" id="Q8FXT9"/>
<dbReference type="GeneID" id="55591719"/>
<dbReference type="KEGG" id="bms:BR2158"/>
<dbReference type="KEGG" id="bsi:BS1330_I2152"/>
<dbReference type="PATRIC" id="fig|204722.21.peg.654"/>
<dbReference type="HOGENOM" id="CLU_019563_3_1_5"/>
<dbReference type="PhylomeDB" id="Q8FXT9"/>
<dbReference type="UniPathway" id="UPA00666"/>
<dbReference type="Proteomes" id="UP000007104">
    <property type="component" value="Chromosome I"/>
</dbReference>
<dbReference type="GO" id="GO:0005886">
    <property type="term" value="C:plasma membrane"/>
    <property type="evidence" value="ECO:0007669"/>
    <property type="project" value="UniProtKB-SubCell"/>
</dbReference>
<dbReference type="GO" id="GO:0016410">
    <property type="term" value="F:N-acyltransferase activity"/>
    <property type="evidence" value="ECO:0007669"/>
    <property type="project" value="UniProtKB-UniRule"/>
</dbReference>
<dbReference type="GO" id="GO:0042158">
    <property type="term" value="P:lipoprotein biosynthetic process"/>
    <property type="evidence" value="ECO:0007669"/>
    <property type="project" value="UniProtKB-UniRule"/>
</dbReference>
<dbReference type="CDD" id="cd07571">
    <property type="entry name" value="ALP_N-acyl_transferase"/>
    <property type="match status" value="1"/>
</dbReference>
<dbReference type="Gene3D" id="3.60.110.10">
    <property type="entry name" value="Carbon-nitrogen hydrolase"/>
    <property type="match status" value="1"/>
</dbReference>
<dbReference type="HAMAP" id="MF_01148">
    <property type="entry name" value="Lnt"/>
    <property type="match status" value="1"/>
</dbReference>
<dbReference type="InterPro" id="IPR004563">
    <property type="entry name" value="Apolipo_AcylTrfase"/>
</dbReference>
<dbReference type="InterPro" id="IPR003010">
    <property type="entry name" value="C-N_Hydrolase"/>
</dbReference>
<dbReference type="InterPro" id="IPR036526">
    <property type="entry name" value="C-N_Hydrolase_sf"/>
</dbReference>
<dbReference type="InterPro" id="IPR045378">
    <property type="entry name" value="LNT_N"/>
</dbReference>
<dbReference type="NCBIfam" id="TIGR00546">
    <property type="entry name" value="lnt"/>
    <property type="match status" value="1"/>
</dbReference>
<dbReference type="PANTHER" id="PTHR38686">
    <property type="entry name" value="APOLIPOPROTEIN N-ACYLTRANSFERASE"/>
    <property type="match status" value="1"/>
</dbReference>
<dbReference type="PANTHER" id="PTHR38686:SF1">
    <property type="entry name" value="APOLIPOPROTEIN N-ACYLTRANSFERASE"/>
    <property type="match status" value="1"/>
</dbReference>
<dbReference type="Pfam" id="PF00795">
    <property type="entry name" value="CN_hydrolase"/>
    <property type="match status" value="1"/>
</dbReference>
<dbReference type="Pfam" id="PF20154">
    <property type="entry name" value="LNT_N"/>
    <property type="match status" value="1"/>
</dbReference>
<dbReference type="SUPFAM" id="SSF56317">
    <property type="entry name" value="Carbon-nitrogen hydrolase"/>
    <property type="match status" value="1"/>
</dbReference>
<dbReference type="PROSITE" id="PS50263">
    <property type="entry name" value="CN_HYDROLASE"/>
    <property type="match status" value="1"/>
</dbReference>
<sequence>MIARLAGRIILLSGWRRALAAFLSGAFATLTQPPFDIFVAGFVSFPVLVWLIDGAIARTDAGPLRRLLPAAKVGWWFGFGYFVSGLWWIGTALLVDADQFAWALPLAVLGLPAFLALFYAFAAMIARLLWSDGLGRILALAFGFALAEWLRTFIFTGFPWNLIGYAAMPVPLLMQSVAVIGLVGMSALAVFVFAAPALLTGGHFARTGIGLAIFLALAHVGFGAWTLSRAPAIVDENGPLAVRIVQPSIAQAMKWDNAERRAIFDKLVGLTEEAPAEGKPRPDVIVWPETAIPYILESTPQALAHIGDALQEGQVLLAGAVREEKGADGGEPRYYNSIYTIDDRGRIVSTADKVHLVPFGEYLPFESFLRGLGLQEVVEMPGGFTAGTTRHALAVKDGRSFLPLICYEAIFPDELGYEGAGASAIINVTNDAWYGDTPGPYQHFRQAQVRAVEQGLPLIRAANNGLSAIVNTYGRITGSLALDAVGVVDSYLPSPRDPFWGRPPGWIQTVLILLTLLAASVGLILYSRRRFH</sequence>
<feature type="chain" id="PRO_0000178051" description="Apolipoprotein N-acyltransferase">
    <location>
        <begin position="1"/>
        <end position="532"/>
    </location>
</feature>
<feature type="transmembrane region" description="Helical" evidence="1">
    <location>
        <begin position="37"/>
        <end position="57"/>
    </location>
</feature>
<feature type="transmembrane region" description="Helical" evidence="1">
    <location>
        <begin position="75"/>
        <end position="95"/>
    </location>
</feature>
<feature type="transmembrane region" description="Helical" evidence="1">
    <location>
        <begin position="106"/>
        <end position="126"/>
    </location>
</feature>
<feature type="transmembrane region" description="Helical" evidence="1">
    <location>
        <begin position="128"/>
        <end position="148"/>
    </location>
</feature>
<feature type="transmembrane region" description="Helical" evidence="1">
    <location>
        <begin position="179"/>
        <end position="199"/>
    </location>
</feature>
<feature type="transmembrane region" description="Helical" evidence="1">
    <location>
        <begin position="207"/>
        <end position="227"/>
    </location>
</feature>
<feature type="transmembrane region" description="Helical" evidence="1">
    <location>
        <begin position="505"/>
        <end position="525"/>
    </location>
</feature>
<feature type="domain" description="CN hydrolase" evidence="1">
    <location>
        <begin position="245"/>
        <end position="494"/>
    </location>
</feature>
<feature type="active site" description="Proton acceptor" evidence="1">
    <location>
        <position position="289"/>
    </location>
</feature>
<feature type="active site" evidence="1">
    <location>
        <position position="353"/>
    </location>
</feature>
<feature type="active site" description="Nucleophile" evidence="1">
    <location>
        <position position="406"/>
    </location>
</feature>
<comment type="function">
    <text evidence="1">Catalyzes the phospholipid dependent N-acylation of the N-terminal cysteine of apolipoprotein, the last step in lipoprotein maturation.</text>
</comment>
<comment type="catalytic activity">
    <reaction evidence="1">
        <text>N-terminal S-1,2-diacyl-sn-glyceryl-L-cysteinyl-[lipoprotein] + a glycerophospholipid = N-acyl-S-1,2-diacyl-sn-glyceryl-L-cysteinyl-[lipoprotein] + a 2-acyl-sn-glycero-3-phospholipid + H(+)</text>
        <dbReference type="Rhea" id="RHEA:48228"/>
        <dbReference type="Rhea" id="RHEA-COMP:14681"/>
        <dbReference type="Rhea" id="RHEA-COMP:14684"/>
        <dbReference type="ChEBI" id="CHEBI:15378"/>
        <dbReference type="ChEBI" id="CHEBI:136912"/>
        <dbReference type="ChEBI" id="CHEBI:140656"/>
        <dbReference type="ChEBI" id="CHEBI:140657"/>
        <dbReference type="ChEBI" id="CHEBI:140660"/>
        <dbReference type="EC" id="2.3.1.269"/>
    </reaction>
</comment>
<comment type="pathway">
    <text evidence="1">Protein modification; lipoprotein biosynthesis (N-acyl transfer).</text>
</comment>
<comment type="subcellular location">
    <subcellularLocation>
        <location evidence="1">Cell inner membrane</location>
        <topology evidence="1">Multi-pass membrane protein</topology>
    </subcellularLocation>
</comment>
<comment type="similarity">
    <text evidence="1">Belongs to the CN hydrolase family. Apolipoprotein N-acyltransferase subfamily.</text>
</comment>
<protein>
    <recommendedName>
        <fullName evidence="1">Apolipoprotein N-acyltransferase</fullName>
        <shortName evidence="1">ALP N-acyltransferase</shortName>
        <ecNumber evidence="1">2.3.1.269</ecNumber>
    </recommendedName>
</protein>
<accession>Q8FXT9</accession>
<accession>G0K9I4</accession>
<proteinExistence type="inferred from homology"/>
<reference key="1">
    <citation type="journal article" date="2002" name="Proc. Natl. Acad. Sci. U.S.A.">
        <title>The Brucella suis genome reveals fundamental similarities between animal and plant pathogens and symbionts.</title>
        <authorList>
            <person name="Paulsen I.T."/>
            <person name="Seshadri R."/>
            <person name="Nelson K.E."/>
            <person name="Eisen J.A."/>
            <person name="Heidelberg J.F."/>
            <person name="Read T.D."/>
            <person name="Dodson R.J."/>
            <person name="Umayam L.A."/>
            <person name="Brinkac L.M."/>
            <person name="Beanan M.J."/>
            <person name="Daugherty S.C."/>
            <person name="DeBoy R.T."/>
            <person name="Durkin A.S."/>
            <person name="Kolonay J.F."/>
            <person name="Madupu R."/>
            <person name="Nelson W.C."/>
            <person name="Ayodeji B."/>
            <person name="Kraul M."/>
            <person name="Shetty J."/>
            <person name="Malek J.A."/>
            <person name="Van Aken S.E."/>
            <person name="Riedmuller S."/>
            <person name="Tettelin H."/>
            <person name="Gill S.R."/>
            <person name="White O."/>
            <person name="Salzberg S.L."/>
            <person name="Hoover D.L."/>
            <person name="Lindler L.E."/>
            <person name="Halling S.M."/>
            <person name="Boyle S.M."/>
            <person name="Fraser C.M."/>
        </authorList>
    </citation>
    <scope>NUCLEOTIDE SEQUENCE [LARGE SCALE GENOMIC DNA]</scope>
    <source>
        <strain>1330</strain>
    </source>
</reference>
<reference key="2">
    <citation type="journal article" date="2011" name="J. Bacteriol.">
        <title>Revised genome sequence of Brucella suis 1330.</title>
        <authorList>
            <person name="Tae H."/>
            <person name="Shallom S."/>
            <person name="Settlage R."/>
            <person name="Preston D."/>
            <person name="Adams L.G."/>
            <person name="Garner H.R."/>
        </authorList>
    </citation>
    <scope>NUCLEOTIDE SEQUENCE [LARGE SCALE GENOMIC DNA]</scope>
    <source>
        <strain>1330</strain>
    </source>
</reference>